<evidence type="ECO:0000255" key="1">
    <source>
        <dbReference type="HAMAP-Rule" id="MF_00391"/>
    </source>
</evidence>
<evidence type="ECO:0000305" key="2"/>
<sequence>MKRTFQPSVLKRARNHGFRSRMATVGGRKVLAARRAKGRARLTTV</sequence>
<protein>
    <recommendedName>
        <fullName evidence="1">Large ribosomal subunit protein bL34</fullName>
    </recommendedName>
    <alternativeName>
        <fullName evidence="2">50S ribosomal protein L34</fullName>
    </alternativeName>
</protein>
<proteinExistence type="inferred from homology"/>
<organism>
    <name type="scientific">Tolumonas auensis (strain DSM 9187 / NBRC 110442 / TA 4)</name>
    <dbReference type="NCBI Taxonomy" id="595494"/>
    <lineage>
        <taxon>Bacteria</taxon>
        <taxon>Pseudomonadati</taxon>
        <taxon>Pseudomonadota</taxon>
        <taxon>Gammaproteobacteria</taxon>
        <taxon>Aeromonadales</taxon>
        <taxon>Aeromonadaceae</taxon>
        <taxon>Tolumonas</taxon>
    </lineage>
</organism>
<reference key="1">
    <citation type="submission" date="2009-05" db="EMBL/GenBank/DDBJ databases">
        <title>Complete sequence of Tolumonas auensis DSM 9187.</title>
        <authorList>
            <consortium name="US DOE Joint Genome Institute"/>
            <person name="Lucas S."/>
            <person name="Copeland A."/>
            <person name="Lapidus A."/>
            <person name="Glavina del Rio T."/>
            <person name="Tice H."/>
            <person name="Bruce D."/>
            <person name="Goodwin L."/>
            <person name="Pitluck S."/>
            <person name="Chertkov O."/>
            <person name="Brettin T."/>
            <person name="Detter J.C."/>
            <person name="Han C."/>
            <person name="Larimer F."/>
            <person name="Land M."/>
            <person name="Hauser L."/>
            <person name="Kyrpides N."/>
            <person name="Mikhailova N."/>
            <person name="Spring S."/>
            <person name="Beller H."/>
        </authorList>
    </citation>
    <scope>NUCLEOTIDE SEQUENCE [LARGE SCALE GENOMIC DNA]</scope>
    <source>
        <strain>DSM 9187 / NBRC 110442 / TA 4</strain>
    </source>
</reference>
<keyword id="KW-1185">Reference proteome</keyword>
<keyword id="KW-0687">Ribonucleoprotein</keyword>
<keyword id="KW-0689">Ribosomal protein</keyword>
<accession>C4LEB8</accession>
<name>RL34_TOLAT</name>
<dbReference type="EMBL" id="CP001616">
    <property type="protein sequence ID" value="ACQ94758.1"/>
    <property type="molecule type" value="Genomic_DNA"/>
</dbReference>
<dbReference type="RefSeq" id="WP_015880207.1">
    <property type="nucleotide sequence ID" value="NC_012691.1"/>
</dbReference>
<dbReference type="SMR" id="C4LEB8"/>
<dbReference type="STRING" id="595494.Tola_3170"/>
<dbReference type="KEGG" id="tau:Tola_3170"/>
<dbReference type="eggNOG" id="COG0230">
    <property type="taxonomic scope" value="Bacteria"/>
</dbReference>
<dbReference type="HOGENOM" id="CLU_129938_2_0_6"/>
<dbReference type="Proteomes" id="UP000009073">
    <property type="component" value="Chromosome"/>
</dbReference>
<dbReference type="GO" id="GO:1990904">
    <property type="term" value="C:ribonucleoprotein complex"/>
    <property type="evidence" value="ECO:0007669"/>
    <property type="project" value="UniProtKB-KW"/>
</dbReference>
<dbReference type="GO" id="GO:0005840">
    <property type="term" value="C:ribosome"/>
    <property type="evidence" value="ECO:0007669"/>
    <property type="project" value="UniProtKB-KW"/>
</dbReference>
<dbReference type="GO" id="GO:0003735">
    <property type="term" value="F:structural constituent of ribosome"/>
    <property type="evidence" value="ECO:0007669"/>
    <property type="project" value="InterPro"/>
</dbReference>
<dbReference type="GO" id="GO:0006412">
    <property type="term" value="P:translation"/>
    <property type="evidence" value="ECO:0007669"/>
    <property type="project" value="UniProtKB-UniRule"/>
</dbReference>
<dbReference type="FunFam" id="1.10.287.3980:FF:000001">
    <property type="entry name" value="Mitochondrial ribosomal protein L34"/>
    <property type="match status" value="1"/>
</dbReference>
<dbReference type="Gene3D" id="1.10.287.3980">
    <property type="match status" value="1"/>
</dbReference>
<dbReference type="HAMAP" id="MF_00391">
    <property type="entry name" value="Ribosomal_bL34"/>
    <property type="match status" value="1"/>
</dbReference>
<dbReference type="InterPro" id="IPR000271">
    <property type="entry name" value="Ribosomal_bL34"/>
</dbReference>
<dbReference type="InterPro" id="IPR020939">
    <property type="entry name" value="Ribosomal_bL34_CS"/>
</dbReference>
<dbReference type="NCBIfam" id="TIGR01030">
    <property type="entry name" value="rpmH_bact"/>
    <property type="match status" value="1"/>
</dbReference>
<dbReference type="PANTHER" id="PTHR14503:SF4">
    <property type="entry name" value="LARGE RIBOSOMAL SUBUNIT PROTEIN BL34M"/>
    <property type="match status" value="1"/>
</dbReference>
<dbReference type="PANTHER" id="PTHR14503">
    <property type="entry name" value="MITOCHONDRIAL RIBOSOMAL PROTEIN 34 FAMILY MEMBER"/>
    <property type="match status" value="1"/>
</dbReference>
<dbReference type="Pfam" id="PF00468">
    <property type="entry name" value="Ribosomal_L34"/>
    <property type="match status" value="1"/>
</dbReference>
<dbReference type="PROSITE" id="PS00784">
    <property type="entry name" value="RIBOSOMAL_L34"/>
    <property type="match status" value="1"/>
</dbReference>
<comment type="similarity">
    <text evidence="1">Belongs to the bacterial ribosomal protein bL34 family.</text>
</comment>
<feature type="chain" id="PRO_1000205840" description="Large ribosomal subunit protein bL34">
    <location>
        <begin position="1"/>
        <end position="45"/>
    </location>
</feature>
<gene>
    <name evidence="1" type="primary">rpmH</name>
    <name type="ordered locus">Tola_3170</name>
</gene>